<keyword id="KW-0053">Apoptosis</keyword>
<keyword id="KW-1035">Host cytoplasm</keyword>
<keyword id="KW-1048">Host nucleus</keyword>
<keyword id="KW-0945">Host-virus interaction</keyword>
<proteinExistence type="evidence at protein level"/>
<protein>
    <recommendedName>
        <fullName>Protein ORF3</fullName>
    </recommendedName>
</protein>
<comment type="function">
    <text evidence="2 3">Plays a role in modulating host cell signaling by binding to and degrading host RGS16 (PubMed:25575706). Not necessary for virus replication (PubMed:15956572).</text>
</comment>
<comment type="subunit">
    <text evidence="3">Interacts with host RGS16.</text>
</comment>
<comment type="subcellular location">
    <subcellularLocation>
        <location evidence="4">Host cytoplasm</location>
    </subcellularLocation>
    <subcellularLocation>
        <location evidence="4">Host nucleus</location>
    </subcellularLocation>
    <text evidence="4">Expressed in cytoplasm in early stages of PCV2 infection and then accumulated in nucleus over time.</text>
</comment>
<name>ORF3_PCV2</name>
<accession>O56124</accession>
<accession>Q9YR18</accession>
<gene>
    <name type="ORF">ORF3</name>
</gene>
<evidence type="ECO:0000256" key="1">
    <source>
        <dbReference type="SAM" id="MobiDB-lite"/>
    </source>
</evidence>
<evidence type="ECO:0000269" key="2">
    <source>
    </source>
</evidence>
<evidence type="ECO:0000269" key="3">
    <source>
    </source>
</evidence>
<evidence type="ECO:0000269" key="4">
    <source>
    </source>
</evidence>
<sequence length="104" mass="11879">MVTIPPLVSRWFPVCGFRVCKISSPFAFTTPRWPHNDVYIGLPITLLHFPAHFQKFSQPAEISDKRYRVLLCNGHQTPALQQGTHSSRQVTPLSLRSRSSTFNK</sequence>
<dbReference type="EMBL" id="AF027217">
    <property type="protein sequence ID" value="AAC59464.1"/>
    <property type="molecule type" value="Genomic_DNA"/>
</dbReference>
<dbReference type="EMBL" id="AF055391">
    <property type="protein sequence ID" value="AAC35300.1"/>
    <property type="molecule type" value="Genomic_DNA"/>
</dbReference>
<dbReference type="EMBL" id="AF055392">
    <property type="protein sequence ID" value="AAC35311.1"/>
    <property type="molecule type" value="Genomic_DNA"/>
</dbReference>
<dbReference type="Proteomes" id="UP000115010">
    <property type="component" value="Genome"/>
</dbReference>
<dbReference type="Proteomes" id="UP000150239">
    <property type="component" value="Genome"/>
</dbReference>
<dbReference type="Proteomes" id="UP000161967">
    <property type="component" value="Genome"/>
</dbReference>
<dbReference type="GO" id="GO:0030430">
    <property type="term" value="C:host cell cytoplasm"/>
    <property type="evidence" value="ECO:0007669"/>
    <property type="project" value="UniProtKB-SubCell"/>
</dbReference>
<dbReference type="GO" id="GO:0042025">
    <property type="term" value="C:host cell nucleus"/>
    <property type="evidence" value="ECO:0007669"/>
    <property type="project" value="UniProtKB-SubCell"/>
</dbReference>
<dbReference type="InterPro" id="IPR008500">
    <property type="entry name" value="Circovirus_Orf3"/>
</dbReference>
<dbReference type="Pfam" id="PF05614">
    <property type="entry name" value="Circovir_ORF3"/>
    <property type="match status" value="1"/>
</dbReference>
<organismHost>
    <name type="scientific">Sus scrofa</name>
    <name type="common">Pig</name>
    <dbReference type="NCBI Taxonomy" id="9823"/>
</organismHost>
<reference key="1">
    <citation type="journal article" date="1998" name="J. Virol.">
        <title>Nucleotide sequence of porcine circovirus associated with postweaning multisystemic wasting syndrome in pigs.</title>
        <authorList>
            <person name="Hamel A.L."/>
            <person name="Lin L.L."/>
            <person name="Nayar G.P."/>
        </authorList>
    </citation>
    <scope>NUCLEOTIDE SEQUENCE [GENOMIC DNA]</scope>
</reference>
<reference key="2">
    <citation type="journal article" date="1998" name="J. Gen. Virol.">
        <title>Characterization of novel circovirus DNAs associated with wasting syndromes in pigs.</title>
        <authorList>
            <person name="Meehan B.M."/>
            <person name="McNeilly F."/>
            <person name="Todd D."/>
            <person name="Kennedy S."/>
            <person name="Jewhurst V.A."/>
            <person name="Ellis J.A."/>
            <person name="Hassard L.E."/>
            <person name="Clark E.G."/>
            <person name="Haines D.M."/>
            <person name="Allan G.M."/>
        </authorList>
    </citation>
    <scope>NUCLEOTIDE SEQUENCE [GENOMIC DNA]</scope>
</reference>
<reference key="3">
    <citation type="journal article" date="2005" name="J. Virol.">
        <title>Characterization of a previously unidentified viral protein in porcine circovirus type 2-infected cells and its role in virus-induced apoptosis.</title>
        <authorList>
            <person name="Liu J."/>
            <person name="Chen I."/>
            <person name="Kwang J."/>
        </authorList>
    </citation>
    <scope>FUNCTION</scope>
</reference>
<reference key="4">
    <citation type="journal article" date="2014" name="Virus Genes">
        <title>Current understanding of genomic DNA of porcine circovirus type 2.</title>
        <authorList>
            <person name="Lv Q.Z."/>
            <person name="Guo K.K."/>
            <person name="Zhang Y.M."/>
        </authorList>
    </citation>
    <scope>REVIEW</scope>
</reference>
<reference key="5">
    <citation type="journal article" date="2015" name="J. Gen. Virol.">
        <title>The ORF3 protein of porcine circovirus type 2 promotes secretion of IL-6 and IL-8 in porcine epithelial cells by facilitating proteasomal degradation of regulator of G protein signalling 16 through physical interaction.</title>
        <authorList>
            <person name="Choi C.Y."/>
            <person name="Rho S.B."/>
            <person name="Kim H.S."/>
            <person name="Han J."/>
            <person name="Bae J."/>
            <person name="Lee S.J."/>
            <person name="Jung W.W."/>
            <person name="Chun T."/>
        </authorList>
    </citation>
    <scope>FUNCTION</scope>
    <scope>INTERACTION WITH HOST RGS16</scope>
</reference>
<reference key="6">
    <citation type="journal article" date="2016" name="Vet. Microbiol.">
        <title>Characterization of specific antigenic epitopes and the nuclear export signal of the Porcine circovirus 2 ORF3 protein.</title>
        <authorList>
            <person name="Gu J."/>
            <person name="Wang L."/>
            <person name="Jin Y."/>
            <person name="Lin C."/>
            <person name="Wang H."/>
            <person name="Zhou N."/>
            <person name="Xing G."/>
            <person name="Liao M."/>
            <person name="Zhou J."/>
        </authorList>
    </citation>
    <scope>SUBCELLULAR LOCATION</scope>
</reference>
<feature type="chain" id="PRO_0000133087" description="Protein ORF3">
    <location>
        <begin position="1"/>
        <end position="104"/>
    </location>
</feature>
<feature type="region of interest" description="Disordered" evidence="1">
    <location>
        <begin position="78"/>
        <end position="104"/>
    </location>
</feature>
<feature type="short sequence motif" description="Nuclear export signal" evidence="4">
    <location>
        <begin position="1"/>
        <end position="35"/>
    </location>
</feature>
<organism>
    <name type="scientific">Porcine circovirus 2</name>
    <name type="common">PCV2</name>
    <dbReference type="NCBI Taxonomy" id="85708"/>
    <lineage>
        <taxon>Viruses</taxon>
        <taxon>Monodnaviria</taxon>
        <taxon>Shotokuvirae</taxon>
        <taxon>Cressdnaviricota</taxon>
        <taxon>Arfiviricetes</taxon>
        <taxon>Cirlivirales</taxon>
        <taxon>Circoviridae</taxon>
        <taxon>Circovirus</taxon>
        <taxon>Circovirus porcine2</taxon>
    </lineage>
</organism>